<protein>
    <recommendedName>
        <fullName evidence="1">Homoserine kinase</fullName>
        <shortName evidence="1">HK</shortName>
        <shortName evidence="1">HSK</shortName>
        <ecNumber evidence="1">2.7.1.39</ecNumber>
    </recommendedName>
</protein>
<organism>
    <name type="scientific">Streptococcus pneumoniae (strain Taiwan19F-14)</name>
    <dbReference type="NCBI Taxonomy" id="487213"/>
    <lineage>
        <taxon>Bacteria</taxon>
        <taxon>Bacillati</taxon>
        <taxon>Bacillota</taxon>
        <taxon>Bacilli</taxon>
        <taxon>Lactobacillales</taxon>
        <taxon>Streptococcaceae</taxon>
        <taxon>Streptococcus</taxon>
    </lineage>
</organism>
<comment type="function">
    <text evidence="1">Catalyzes the ATP-dependent phosphorylation of L-homoserine to L-homoserine phosphate.</text>
</comment>
<comment type="catalytic activity">
    <reaction evidence="1">
        <text>L-homoserine + ATP = O-phospho-L-homoserine + ADP + H(+)</text>
        <dbReference type="Rhea" id="RHEA:13985"/>
        <dbReference type="ChEBI" id="CHEBI:15378"/>
        <dbReference type="ChEBI" id="CHEBI:30616"/>
        <dbReference type="ChEBI" id="CHEBI:57476"/>
        <dbReference type="ChEBI" id="CHEBI:57590"/>
        <dbReference type="ChEBI" id="CHEBI:456216"/>
        <dbReference type="EC" id="2.7.1.39"/>
    </reaction>
</comment>
<comment type="pathway">
    <text evidence="1">Amino-acid biosynthesis; L-threonine biosynthesis; L-threonine from L-aspartate: step 4/5.</text>
</comment>
<comment type="subcellular location">
    <subcellularLocation>
        <location evidence="1">Cytoplasm</location>
    </subcellularLocation>
</comment>
<comment type="similarity">
    <text evidence="1">Belongs to the GHMP kinase family. Homoserine kinase subfamily.</text>
</comment>
<proteinExistence type="inferred from homology"/>
<accession>C1CQZ4</accession>
<reference key="1">
    <citation type="journal article" date="2010" name="Genome Biol.">
        <title>Structure and dynamics of the pan-genome of Streptococcus pneumoniae and closely related species.</title>
        <authorList>
            <person name="Donati C."/>
            <person name="Hiller N.L."/>
            <person name="Tettelin H."/>
            <person name="Muzzi A."/>
            <person name="Croucher N.J."/>
            <person name="Angiuoli S.V."/>
            <person name="Oggioni M."/>
            <person name="Dunning Hotopp J.C."/>
            <person name="Hu F.Z."/>
            <person name="Riley D.R."/>
            <person name="Covacci A."/>
            <person name="Mitchell T.J."/>
            <person name="Bentley S.D."/>
            <person name="Kilian M."/>
            <person name="Ehrlich G.D."/>
            <person name="Rappuoli R."/>
            <person name="Moxon E.R."/>
            <person name="Masignani V."/>
        </authorList>
    </citation>
    <scope>NUCLEOTIDE SEQUENCE [LARGE SCALE GENOMIC DNA]</scope>
    <source>
        <strain>Taiwan19F-14</strain>
    </source>
</reference>
<name>KHSE_STRZT</name>
<dbReference type="EC" id="2.7.1.39" evidence="1"/>
<dbReference type="EMBL" id="CP000921">
    <property type="protein sequence ID" value="ACO22861.1"/>
    <property type="molecule type" value="Genomic_DNA"/>
</dbReference>
<dbReference type="RefSeq" id="WP_000692436.1">
    <property type="nucleotide sequence ID" value="NC_012469.1"/>
</dbReference>
<dbReference type="SMR" id="C1CQZ4"/>
<dbReference type="KEGG" id="snt:SPT_0914"/>
<dbReference type="HOGENOM" id="CLU_041243_0_0_9"/>
<dbReference type="UniPathway" id="UPA00050">
    <property type="reaction ID" value="UER00064"/>
</dbReference>
<dbReference type="GO" id="GO:0005737">
    <property type="term" value="C:cytoplasm"/>
    <property type="evidence" value="ECO:0007669"/>
    <property type="project" value="UniProtKB-SubCell"/>
</dbReference>
<dbReference type="GO" id="GO:0005524">
    <property type="term" value="F:ATP binding"/>
    <property type="evidence" value="ECO:0007669"/>
    <property type="project" value="UniProtKB-UniRule"/>
</dbReference>
<dbReference type="GO" id="GO:0004413">
    <property type="term" value="F:homoserine kinase activity"/>
    <property type="evidence" value="ECO:0007669"/>
    <property type="project" value="UniProtKB-UniRule"/>
</dbReference>
<dbReference type="GO" id="GO:0009088">
    <property type="term" value="P:threonine biosynthetic process"/>
    <property type="evidence" value="ECO:0007669"/>
    <property type="project" value="UniProtKB-UniRule"/>
</dbReference>
<dbReference type="Gene3D" id="3.30.230.10">
    <property type="match status" value="1"/>
</dbReference>
<dbReference type="Gene3D" id="3.30.70.890">
    <property type="entry name" value="GHMP kinase, C-terminal domain"/>
    <property type="match status" value="1"/>
</dbReference>
<dbReference type="HAMAP" id="MF_00384">
    <property type="entry name" value="Homoser_kinase"/>
    <property type="match status" value="1"/>
</dbReference>
<dbReference type="InterPro" id="IPR013750">
    <property type="entry name" value="GHMP_kinase_C_dom"/>
</dbReference>
<dbReference type="InterPro" id="IPR036554">
    <property type="entry name" value="GHMP_kinase_C_sf"/>
</dbReference>
<dbReference type="InterPro" id="IPR006204">
    <property type="entry name" value="GHMP_kinase_N_dom"/>
</dbReference>
<dbReference type="InterPro" id="IPR006203">
    <property type="entry name" value="GHMP_knse_ATP-bd_CS"/>
</dbReference>
<dbReference type="InterPro" id="IPR000870">
    <property type="entry name" value="Homoserine_kinase"/>
</dbReference>
<dbReference type="InterPro" id="IPR020568">
    <property type="entry name" value="Ribosomal_Su5_D2-typ_SF"/>
</dbReference>
<dbReference type="InterPro" id="IPR014721">
    <property type="entry name" value="Ribsml_uS5_D2-typ_fold_subgr"/>
</dbReference>
<dbReference type="NCBIfam" id="TIGR00191">
    <property type="entry name" value="thrB"/>
    <property type="match status" value="1"/>
</dbReference>
<dbReference type="PANTHER" id="PTHR20861:SF1">
    <property type="entry name" value="HOMOSERINE KINASE"/>
    <property type="match status" value="1"/>
</dbReference>
<dbReference type="PANTHER" id="PTHR20861">
    <property type="entry name" value="HOMOSERINE/4-DIPHOSPHOCYTIDYL-2-C-METHYL-D-ERYTHRITOL KINASE"/>
    <property type="match status" value="1"/>
</dbReference>
<dbReference type="Pfam" id="PF08544">
    <property type="entry name" value="GHMP_kinases_C"/>
    <property type="match status" value="1"/>
</dbReference>
<dbReference type="Pfam" id="PF00288">
    <property type="entry name" value="GHMP_kinases_N"/>
    <property type="match status" value="1"/>
</dbReference>
<dbReference type="PIRSF" id="PIRSF000676">
    <property type="entry name" value="Homoser_kin"/>
    <property type="match status" value="1"/>
</dbReference>
<dbReference type="PRINTS" id="PR00958">
    <property type="entry name" value="HOMSERKINASE"/>
</dbReference>
<dbReference type="SUPFAM" id="SSF55060">
    <property type="entry name" value="GHMP Kinase, C-terminal domain"/>
    <property type="match status" value="1"/>
</dbReference>
<dbReference type="SUPFAM" id="SSF54211">
    <property type="entry name" value="Ribosomal protein S5 domain 2-like"/>
    <property type="match status" value="1"/>
</dbReference>
<dbReference type="PROSITE" id="PS00627">
    <property type="entry name" value="GHMP_KINASES_ATP"/>
    <property type="match status" value="1"/>
</dbReference>
<sequence length="289" mass="31560">MKIIVPATSANIGPGFDSVGVAVTKYLQIEVCEERDEWLIEHQIGKWIPHDERNLLLKIALQIVPDLQPRRLKMTSDVPLARGLGSSSSVIVAGIELANQLGQLNLSDHEKLQLATKIEGHPDNVAPAIYGNLVIASSVEGQVSAIVADFPECDFLAYIPNYELRTRDSRSVLPKKLSYKEAVAASSIANVAVAALLAGDMVTAGQAIEGDLFHERYRQDLVREFAMIKQVTKENGAYATYLSGAGPTVMVLASHDKMPIIKAELEKQPFKGKLHDLRVDTQGVRVEAK</sequence>
<gene>
    <name evidence="1" type="primary">thrB</name>
    <name type="ordered locus">SPT_0914</name>
</gene>
<keyword id="KW-0028">Amino-acid biosynthesis</keyword>
<keyword id="KW-0067">ATP-binding</keyword>
<keyword id="KW-0963">Cytoplasm</keyword>
<keyword id="KW-0418">Kinase</keyword>
<keyword id="KW-0547">Nucleotide-binding</keyword>
<keyword id="KW-0791">Threonine biosynthesis</keyword>
<keyword id="KW-0808">Transferase</keyword>
<feature type="chain" id="PRO_1000134267" description="Homoserine kinase">
    <location>
        <begin position="1"/>
        <end position="289"/>
    </location>
</feature>
<feature type="binding site" evidence="1">
    <location>
        <begin position="79"/>
        <end position="89"/>
    </location>
    <ligand>
        <name>ATP</name>
        <dbReference type="ChEBI" id="CHEBI:30616"/>
    </ligand>
</feature>
<evidence type="ECO:0000255" key="1">
    <source>
        <dbReference type="HAMAP-Rule" id="MF_00384"/>
    </source>
</evidence>